<accession>A1BE50</accession>
<proteinExistence type="inferred from homology"/>
<gene>
    <name evidence="1" type="primary">macB</name>
    <name type="ordered locus">Cpha266_0622</name>
</gene>
<protein>
    <recommendedName>
        <fullName evidence="1">Macrolide export ATP-binding/permease protein MacB</fullName>
        <ecNumber evidence="1">7.6.2.-</ecNumber>
    </recommendedName>
</protein>
<name>MACB_CHLPD</name>
<reference key="1">
    <citation type="submission" date="2006-12" db="EMBL/GenBank/DDBJ databases">
        <title>Complete sequence of Chlorobium phaeobacteroides DSM 266.</title>
        <authorList>
            <consortium name="US DOE Joint Genome Institute"/>
            <person name="Copeland A."/>
            <person name="Lucas S."/>
            <person name="Lapidus A."/>
            <person name="Barry K."/>
            <person name="Detter J.C."/>
            <person name="Glavina del Rio T."/>
            <person name="Hammon N."/>
            <person name="Israni S."/>
            <person name="Pitluck S."/>
            <person name="Goltsman E."/>
            <person name="Schmutz J."/>
            <person name="Larimer F."/>
            <person name="Land M."/>
            <person name="Hauser L."/>
            <person name="Mikhailova N."/>
            <person name="Li T."/>
            <person name="Overmann J."/>
            <person name="Bryant D.A."/>
            <person name="Richardson P."/>
        </authorList>
    </citation>
    <scope>NUCLEOTIDE SEQUENCE [LARGE SCALE GENOMIC DNA]</scope>
    <source>
        <strain>DSM 266 / SMG 266 / 2430</strain>
    </source>
</reference>
<keyword id="KW-0046">Antibiotic resistance</keyword>
<keyword id="KW-0067">ATP-binding</keyword>
<keyword id="KW-0997">Cell inner membrane</keyword>
<keyword id="KW-1003">Cell membrane</keyword>
<keyword id="KW-0472">Membrane</keyword>
<keyword id="KW-0547">Nucleotide-binding</keyword>
<keyword id="KW-1185">Reference proteome</keyword>
<keyword id="KW-1278">Translocase</keyword>
<keyword id="KW-0812">Transmembrane</keyword>
<keyword id="KW-1133">Transmembrane helix</keyword>
<keyword id="KW-0813">Transport</keyword>
<evidence type="ECO:0000255" key="1">
    <source>
        <dbReference type="HAMAP-Rule" id="MF_01720"/>
    </source>
</evidence>
<dbReference type="EC" id="7.6.2.-" evidence="1"/>
<dbReference type="EMBL" id="CP000492">
    <property type="protein sequence ID" value="ABL64677.1"/>
    <property type="molecule type" value="Genomic_DNA"/>
</dbReference>
<dbReference type="RefSeq" id="WP_011744510.1">
    <property type="nucleotide sequence ID" value="NC_008639.1"/>
</dbReference>
<dbReference type="SMR" id="A1BE50"/>
<dbReference type="STRING" id="290317.Cpha266_0622"/>
<dbReference type="KEGG" id="cph:Cpha266_0622"/>
<dbReference type="eggNOG" id="COG0577">
    <property type="taxonomic scope" value="Bacteria"/>
</dbReference>
<dbReference type="eggNOG" id="COG1136">
    <property type="taxonomic scope" value="Bacteria"/>
</dbReference>
<dbReference type="HOGENOM" id="CLU_000604_78_2_10"/>
<dbReference type="OrthoDB" id="9769100at2"/>
<dbReference type="Proteomes" id="UP000008701">
    <property type="component" value="Chromosome"/>
</dbReference>
<dbReference type="GO" id="GO:0005886">
    <property type="term" value="C:plasma membrane"/>
    <property type="evidence" value="ECO:0007669"/>
    <property type="project" value="UniProtKB-SubCell"/>
</dbReference>
<dbReference type="GO" id="GO:0005524">
    <property type="term" value="F:ATP binding"/>
    <property type="evidence" value="ECO:0007669"/>
    <property type="project" value="UniProtKB-KW"/>
</dbReference>
<dbReference type="GO" id="GO:0016887">
    <property type="term" value="F:ATP hydrolysis activity"/>
    <property type="evidence" value="ECO:0007669"/>
    <property type="project" value="InterPro"/>
</dbReference>
<dbReference type="GO" id="GO:0022857">
    <property type="term" value="F:transmembrane transporter activity"/>
    <property type="evidence" value="ECO:0007669"/>
    <property type="project" value="TreeGrafter"/>
</dbReference>
<dbReference type="GO" id="GO:0046677">
    <property type="term" value="P:response to antibiotic"/>
    <property type="evidence" value="ECO:0007669"/>
    <property type="project" value="UniProtKB-KW"/>
</dbReference>
<dbReference type="CDD" id="cd03255">
    <property type="entry name" value="ABC_MJ0796_LolCDE_FtsE"/>
    <property type="match status" value="1"/>
</dbReference>
<dbReference type="FunFam" id="3.40.50.300:FF:000032">
    <property type="entry name" value="Export ABC transporter ATP-binding protein"/>
    <property type="match status" value="1"/>
</dbReference>
<dbReference type="Gene3D" id="3.40.50.300">
    <property type="entry name" value="P-loop containing nucleotide triphosphate hydrolases"/>
    <property type="match status" value="1"/>
</dbReference>
<dbReference type="InterPro" id="IPR003593">
    <property type="entry name" value="AAA+_ATPase"/>
</dbReference>
<dbReference type="InterPro" id="IPR003838">
    <property type="entry name" value="ABC3_permease_C"/>
</dbReference>
<dbReference type="InterPro" id="IPR003439">
    <property type="entry name" value="ABC_transporter-like_ATP-bd"/>
</dbReference>
<dbReference type="InterPro" id="IPR017871">
    <property type="entry name" value="ABC_transporter-like_CS"/>
</dbReference>
<dbReference type="InterPro" id="IPR017911">
    <property type="entry name" value="MacB-like_ATP-bd"/>
</dbReference>
<dbReference type="InterPro" id="IPR025857">
    <property type="entry name" value="MacB_PCD"/>
</dbReference>
<dbReference type="InterPro" id="IPR050250">
    <property type="entry name" value="Macrolide_Exporter_MacB"/>
</dbReference>
<dbReference type="InterPro" id="IPR027417">
    <property type="entry name" value="P-loop_NTPase"/>
</dbReference>
<dbReference type="PANTHER" id="PTHR30572:SF4">
    <property type="entry name" value="ABC TRANSPORTER PERMEASE YTRF"/>
    <property type="match status" value="1"/>
</dbReference>
<dbReference type="PANTHER" id="PTHR30572">
    <property type="entry name" value="MEMBRANE COMPONENT OF TRANSPORTER-RELATED"/>
    <property type="match status" value="1"/>
</dbReference>
<dbReference type="Pfam" id="PF00005">
    <property type="entry name" value="ABC_tran"/>
    <property type="match status" value="1"/>
</dbReference>
<dbReference type="Pfam" id="PF02687">
    <property type="entry name" value="FtsX"/>
    <property type="match status" value="1"/>
</dbReference>
<dbReference type="Pfam" id="PF12704">
    <property type="entry name" value="MacB_PCD"/>
    <property type="match status" value="1"/>
</dbReference>
<dbReference type="SMART" id="SM00382">
    <property type="entry name" value="AAA"/>
    <property type="match status" value="1"/>
</dbReference>
<dbReference type="SUPFAM" id="SSF52540">
    <property type="entry name" value="P-loop containing nucleoside triphosphate hydrolases"/>
    <property type="match status" value="1"/>
</dbReference>
<dbReference type="PROSITE" id="PS00211">
    <property type="entry name" value="ABC_TRANSPORTER_1"/>
    <property type="match status" value="1"/>
</dbReference>
<dbReference type="PROSITE" id="PS50893">
    <property type="entry name" value="ABC_TRANSPORTER_2"/>
    <property type="match status" value="1"/>
</dbReference>
<dbReference type="PROSITE" id="PS51267">
    <property type="entry name" value="MACB"/>
    <property type="match status" value="1"/>
</dbReference>
<feature type="chain" id="PRO_0000280166" description="Macrolide export ATP-binding/permease protein MacB">
    <location>
        <begin position="1"/>
        <end position="657"/>
    </location>
</feature>
<feature type="transmembrane region" description="Helical" evidence="1">
    <location>
        <begin position="276"/>
        <end position="296"/>
    </location>
</feature>
<feature type="transmembrane region" description="Helical" evidence="1">
    <location>
        <begin position="538"/>
        <end position="558"/>
    </location>
</feature>
<feature type="transmembrane region" description="Helical" evidence="1">
    <location>
        <begin position="596"/>
        <end position="616"/>
    </location>
</feature>
<feature type="transmembrane region" description="Helical" evidence="1">
    <location>
        <begin position="620"/>
        <end position="640"/>
    </location>
</feature>
<feature type="domain" description="ABC transporter" evidence="1">
    <location>
        <begin position="5"/>
        <end position="242"/>
    </location>
</feature>
<feature type="binding site" evidence="1">
    <location>
        <begin position="41"/>
        <end position="48"/>
    </location>
    <ligand>
        <name>ATP</name>
        <dbReference type="ChEBI" id="CHEBI:30616"/>
    </ligand>
</feature>
<comment type="function">
    <text evidence="1">Non-canonical ABC transporter that contains transmembrane domains (TMD), which form a pore in the inner membrane, and an ATP-binding domain (NBD), which is responsible for energy generation. Confers resistance against macrolides.</text>
</comment>
<comment type="subunit">
    <text evidence="1">Homodimer.</text>
</comment>
<comment type="subcellular location">
    <subcellularLocation>
        <location evidence="1">Cell inner membrane</location>
        <topology evidence="1">Multi-pass membrane protein</topology>
    </subcellularLocation>
</comment>
<comment type="similarity">
    <text evidence="1">Belongs to the ABC transporter superfamily. Macrolide exporter (TC 3.A.1.122) family.</text>
</comment>
<organism>
    <name type="scientific">Chlorobium phaeobacteroides (strain DSM 266 / SMG 266 / 2430)</name>
    <dbReference type="NCBI Taxonomy" id="290317"/>
    <lineage>
        <taxon>Bacteria</taxon>
        <taxon>Pseudomonadati</taxon>
        <taxon>Chlorobiota</taxon>
        <taxon>Chlorobiia</taxon>
        <taxon>Chlorobiales</taxon>
        <taxon>Chlorobiaceae</taxon>
        <taxon>Chlorobium/Pelodictyon group</taxon>
        <taxon>Chlorobium</taxon>
    </lineage>
</organism>
<sequence>MNPLLELLDVHRTYQIGETTVNALRGVSLTIDRGEFVAIMGASGSGKSSLLQILGLLDNPDKGEFKILGNNVNTLSEDEQAGVRNNVAGFVFQQFHLLKRMTIVDNVRLPHIYSGLKGDFRQEAIARLKLVGLEERIDHTPNQLSGGEQQRVAIARALVRDPLIIFADEPTGNLDSKNSAEIMKIFTALHEEGKTIIMVTHENDIAAYACRVIIMKDGLIVSDERKAEMQPSRAVTGESAFDISGSGKGSIWQDGRFTGFMAQAFQSILANKMRTFLSVLGIFVGVASVIAMMALGEGAKSAMQEQLKSMGSNMLSIRGGSAKIRGAAQGAGAVARFSFNDVNDIASLGKLVKNASGVVNGSARIVYGNKNWSSTLTGVGFDYGTMRASIPAIGRWFTREEIQIREKSAIIGVTVVKEIFGSSNPIGKTIKINRINFKVIGIAPAKGFSGPQDEDDVVIIPVTTAMYRVLGKDYLSSIFVEVASPGLMGQAKTAITELIRKKHRLEEGDDSFNIRDMTEIQKMLSSTTQTMSLLLGSIAAISLLVGGIGIMNIMLVSVTERTREIGLRKAIGARKNDIMLQFLIESVGMTISGGLIGVFAGVGISLILAFFAGWAVKTSLLSVVLATTFSALIGVFFGLWPARKAAALKPVEALRYE</sequence>